<feature type="chain" id="PRO_0000112433" description="N-acetyl-gamma-glutamyl-phosphate reductase">
    <location>
        <begin position="1"/>
        <end position="334"/>
    </location>
</feature>
<feature type="active site" evidence="1">
    <location>
        <position position="154"/>
    </location>
</feature>
<evidence type="ECO:0000255" key="1">
    <source>
        <dbReference type="HAMAP-Rule" id="MF_00150"/>
    </source>
</evidence>
<comment type="function">
    <text evidence="1">Catalyzes the NADPH-dependent reduction of N-acetyl-5-glutamyl phosphate to yield N-acetyl-L-glutamate 5-semialdehyde.</text>
</comment>
<comment type="catalytic activity">
    <reaction evidence="1">
        <text>N-acetyl-L-glutamate 5-semialdehyde + phosphate + NADP(+) = N-acetyl-L-glutamyl 5-phosphate + NADPH + H(+)</text>
        <dbReference type="Rhea" id="RHEA:21588"/>
        <dbReference type="ChEBI" id="CHEBI:15378"/>
        <dbReference type="ChEBI" id="CHEBI:29123"/>
        <dbReference type="ChEBI" id="CHEBI:43474"/>
        <dbReference type="ChEBI" id="CHEBI:57783"/>
        <dbReference type="ChEBI" id="CHEBI:57936"/>
        <dbReference type="ChEBI" id="CHEBI:58349"/>
        <dbReference type="EC" id="1.2.1.38"/>
    </reaction>
</comment>
<comment type="pathway">
    <text evidence="1">Amino-acid biosynthesis; L-arginine biosynthesis; N(2)-acetyl-L-ornithine from L-glutamate: step 3/4.</text>
</comment>
<comment type="subcellular location">
    <subcellularLocation>
        <location evidence="1">Cytoplasm</location>
    </subcellularLocation>
</comment>
<comment type="similarity">
    <text evidence="1">Belongs to the NAGSA dehydrogenase family. Type 1 subfamily.</text>
</comment>
<name>ARGC_PHOLL</name>
<keyword id="KW-0028">Amino-acid biosynthesis</keyword>
<keyword id="KW-0055">Arginine biosynthesis</keyword>
<keyword id="KW-0963">Cytoplasm</keyword>
<keyword id="KW-0521">NADP</keyword>
<keyword id="KW-0560">Oxidoreductase</keyword>
<keyword id="KW-1185">Reference proteome</keyword>
<proteinExistence type="inferred from homology"/>
<sequence length="334" mass="36609">MLNTLVVGASGYTGAELAAYLHRHPHMNLIRLMVSAQSVDADKCFSDLHPQYKGIVDLPLQPLTDIINAAKGIDVVFLATAHEVSHDIAPLFLAAGCTVFDLSGAYRVQNAQIYQQYYGFKHKHTEWLAQAVYGLAEWQAENIKQAQLVAVPGCYPTVSQLCLKPLLENSLLDISYWPVINATSGVSGAGRKASMTNSFCEISLQPYGIFTHRHQPEIEEHLGTRVVFTPHLGNFARGILATITCKLKPGVTAEQIDEVYRQAYKDKPLVRLYSKGVPALKSVVGLPFCDIGFVVQGDHLIVVGTEDNLLKGAAAQAVQCMNIRFGFEETQALL</sequence>
<protein>
    <recommendedName>
        <fullName evidence="1">N-acetyl-gamma-glutamyl-phosphate reductase</fullName>
        <shortName evidence="1">AGPR</shortName>
        <ecNumber evidence="1">1.2.1.38</ecNumber>
    </recommendedName>
    <alternativeName>
        <fullName evidence="1">N-acetyl-glutamate semialdehyde dehydrogenase</fullName>
        <shortName evidence="1">NAGSA dehydrogenase</shortName>
    </alternativeName>
</protein>
<reference key="1">
    <citation type="journal article" date="2003" name="Nat. Biotechnol.">
        <title>The genome sequence of the entomopathogenic bacterium Photorhabdus luminescens.</title>
        <authorList>
            <person name="Duchaud E."/>
            <person name="Rusniok C."/>
            <person name="Frangeul L."/>
            <person name="Buchrieser C."/>
            <person name="Givaudan A."/>
            <person name="Taourit S."/>
            <person name="Bocs S."/>
            <person name="Boursaux-Eude C."/>
            <person name="Chandler M."/>
            <person name="Charles J.-F."/>
            <person name="Dassa E."/>
            <person name="Derose R."/>
            <person name="Derzelle S."/>
            <person name="Freyssinet G."/>
            <person name="Gaudriault S."/>
            <person name="Medigue C."/>
            <person name="Lanois A."/>
            <person name="Powell K."/>
            <person name="Siguier P."/>
            <person name="Vincent R."/>
            <person name="Wingate V."/>
            <person name="Zouine M."/>
            <person name="Glaser P."/>
            <person name="Boemare N."/>
            <person name="Danchin A."/>
            <person name="Kunst F."/>
        </authorList>
    </citation>
    <scope>NUCLEOTIDE SEQUENCE [LARGE SCALE GENOMIC DNA]</scope>
    <source>
        <strain>DSM 15139 / CIP 105565 / TT01</strain>
    </source>
</reference>
<accession>Q7MYD6</accession>
<gene>
    <name evidence="1" type="primary">argC</name>
    <name type="ordered locus">plu4744</name>
</gene>
<dbReference type="EC" id="1.2.1.38" evidence="1"/>
<dbReference type="EMBL" id="BX571874">
    <property type="protein sequence ID" value="CAE17116.1"/>
    <property type="molecule type" value="Genomic_DNA"/>
</dbReference>
<dbReference type="RefSeq" id="WP_011148812.1">
    <property type="nucleotide sequence ID" value="NC_005126.1"/>
</dbReference>
<dbReference type="SMR" id="Q7MYD6"/>
<dbReference type="STRING" id="243265.plu4744"/>
<dbReference type="GeneID" id="48850979"/>
<dbReference type="KEGG" id="plu:plu4744"/>
<dbReference type="eggNOG" id="COG0002">
    <property type="taxonomic scope" value="Bacteria"/>
</dbReference>
<dbReference type="HOGENOM" id="CLU_006384_0_1_6"/>
<dbReference type="OrthoDB" id="9801289at2"/>
<dbReference type="UniPathway" id="UPA00068">
    <property type="reaction ID" value="UER00108"/>
</dbReference>
<dbReference type="Proteomes" id="UP000002514">
    <property type="component" value="Chromosome"/>
</dbReference>
<dbReference type="GO" id="GO:0005737">
    <property type="term" value="C:cytoplasm"/>
    <property type="evidence" value="ECO:0007669"/>
    <property type="project" value="UniProtKB-SubCell"/>
</dbReference>
<dbReference type="GO" id="GO:0003942">
    <property type="term" value="F:N-acetyl-gamma-glutamyl-phosphate reductase activity"/>
    <property type="evidence" value="ECO:0007669"/>
    <property type="project" value="UniProtKB-UniRule"/>
</dbReference>
<dbReference type="GO" id="GO:0051287">
    <property type="term" value="F:NAD binding"/>
    <property type="evidence" value="ECO:0007669"/>
    <property type="project" value="InterPro"/>
</dbReference>
<dbReference type="GO" id="GO:0070401">
    <property type="term" value="F:NADP+ binding"/>
    <property type="evidence" value="ECO:0007669"/>
    <property type="project" value="InterPro"/>
</dbReference>
<dbReference type="GO" id="GO:0006526">
    <property type="term" value="P:L-arginine biosynthetic process"/>
    <property type="evidence" value="ECO:0007669"/>
    <property type="project" value="UniProtKB-UniRule"/>
</dbReference>
<dbReference type="CDD" id="cd23934">
    <property type="entry name" value="AGPR_1_C"/>
    <property type="match status" value="1"/>
</dbReference>
<dbReference type="CDD" id="cd17895">
    <property type="entry name" value="AGPR_1_N"/>
    <property type="match status" value="1"/>
</dbReference>
<dbReference type="FunFam" id="3.30.360.10:FF:000014">
    <property type="entry name" value="N-acetyl-gamma-glutamyl-phosphate reductase"/>
    <property type="match status" value="1"/>
</dbReference>
<dbReference type="FunFam" id="3.40.50.720:FF:000117">
    <property type="entry name" value="N-acetyl-gamma-glutamyl-phosphate reductase"/>
    <property type="match status" value="1"/>
</dbReference>
<dbReference type="Gene3D" id="3.30.360.10">
    <property type="entry name" value="Dihydrodipicolinate Reductase, domain 2"/>
    <property type="match status" value="1"/>
</dbReference>
<dbReference type="Gene3D" id="3.40.50.720">
    <property type="entry name" value="NAD(P)-binding Rossmann-like Domain"/>
    <property type="match status" value="1"/>
</dbReference>
<dbReference type="HAMAP" id="MF_00150">
    <property type="entry name" value="ArgC_type1"/>
    <property type="match status" value="1"/>
</dbReference>
<dbReference type="InterPro" id="IPR023013">
    <property type="entry name" value="AGPR_AS"/>
</dbReference>
<dbReference type="InterPro" id="IPR000706">
    <property type="entry name" value="AGPR_type-1"/>
</dbReference>
<dbReference type="InterPro" id="IPR036291">
    <property type="entry name" value="NAD(P)-bd_dom_sf"/>
</dbReference>
<dbReference type="InterPro" id="IPR050085">
    <property type="entry name" value="NAGSA_dehydrogenase"/>
</dbReference>
<dbReference type="InterPro" id="IPR000534">
    <property type="entry name" value="Semialdehyde_DH_NAD-bd"/>
</dbReference>
<dbReference type="NCBIfam" id="TIGR01850">
    <property type="entry name" value="argC"/>
    <property type="match status" value="1"/>
</dbReference>
<dbReference type="PANTHER" id="PTHR32338:SF10">
    <property type="entry name" value="N-ACETYL-GAMMA-GLUTAMYL-PHOSPHATE REDUCTASE, CHLOROPLASTIC-RELATED"/>
    <property type="match status" value="1"/>
</dbReference>
<dbReference type="PANTHER" id="PTHR32338">
    <property type="entry name" value="N-ACETYL-GAMMA-GLUTAMYL-PHOSPHATE REDUCTASE, CHLOROPLASTIC-RELATED-RELATED"/>
    <property type="match status" value="1"/>
</dbReference>
<dbReference type="Pfam" id="PF01118">
    <property type="entry name" value="Semialdhyde_dh"/>
    <property type="match status" value="1"/>
</dbReference>
<dbReference type="Pfam" id="PF22698">
    <property type="entry name" value="Semialdhyde_dhC_1"/>
    <property type="match status" value="1"/>
</dbReference>
<dbReference type="SMART" id="SM00859">
    <property type="entry name" value="Semialdhyde_dh"/>
    <property type="match status" value="1"/>
</dbReference>
<dbReference type="SUPFAM" id="SSF55347">
    <property type="entry name" value="Glyceraldehyde-3-phosphate dehydrogenase-like, C-terminal domain"/>
    <property type="match status" value="1"/>
</dbReference>
<dbReference type="SUPFAM" id="SSF51735">
    <property type="entry name" value="NAD(P)-binding Rossmann-fold domains"/>
    <property type="match status" value="1"/>
</dbReference>
<dbReference type="PROSITE" id="PS01224">
    <property type="entry name" value="ARGC"/>
    <property type="match status" value="1"/>
</dbReference>
<organism>
    <name type="scientific">Photorhabdus laumondii subsp. laumondii (strain DSM 15139 / CIP 105565 / TT01)</name>
    <name type="common">Photorhabdus luminescens subsp. laumondii</name>
    <dbReference type="NCBI Taxonomy" id="243265"/>
    <lineage>
        <taxon>Bacteria</taxon>
        <taxon>Pseudomonadati</taxon>
        <taxon>Pseudomonadota</taxon>
        <taxon>Gammaproteobacteria</taxon>
        <taxon>Enterobacterales</taxon>
        <taxon>Morganellaceae</taxon>
        <taxon>Photorhabdus</taxon>
    </lineage>
</organism>